<keyword id="KW-0663">Pyridoxal phosphate</keyword>
<keyword id="KW-1185">Reference proteome</keyword>
<name>PLPHP_MYCBO</name>
<reference key="1">
    <citation type="journal article" date="2003" name="Proc. Natl. Acad. Sci. U.S.A.">
        <title>The complete genome sequence of Mycobacterium bovis.</title>
        <authorList>
            <person name="Garnier T."/>
            <person name="Eiglmeier K."/>
            <person name="Camus J.-C."/>
            <person name="Medina N."/>
            <person name="Mansoor H."/>
            <person name="Pryor M."/>
            <person name="Duthoy S."/>
            <person name="Grondin S."/>
            <person name="Lacroix C."/>
            <person name="Monsempe C."/>
            <person name="Simon S."/>
            <person name="Harris B."/>
            <person name="Atkin R."/>
            <person name="Doggett J."/>
            <person name="Mayes R."/>
            <person name="Keating L."/>
            <person name="Wheeler P.R."/>
            <person name="Parkhill J."/>
            <person name="Barrell B.G."/>
            <person name="Cole S.T."/>
            <person name="Gordon S.V."/>
            <person name="Hewinson R.G."/>
        </authorList>
    </citation>
    <scope>NUCLEOTIDE SEQUENCE [LARGE SCALE GENOMIC DNA]</scope>
    <source>
        <strain>ATCC BAA-935 / AF2122/97</strain>
    </source>
</reference>
<reference key="2">
    <citation type="journal article" date="2017" name="Genome Announc.">
        <title>Updated reference genome sequence and annotation of Mycobacterium bovis AF2122/97.</title>
        <authorList>
            <person name="Malone K.M."/>
            <person name="Farrell D."/>
            <person name="Stuber T.P."/>
            <person name="Schubert O.T."/>
            <person name="Aebersold R."/>
            <person name="Robbe-Austerman S."/>
            <person name="Gordon S.V."/>
        </authorList>
    </citation>
    <scope>NUCLEOTIDE SEQUENCE [LARGE SCALE GENOMIC DNA]</scope>
    <scope>GENOME REANNOTATION</scope>
    <source>
        <strain>ATCC BAA-935 / AF2122/97</strain>
    </source>
</reference>
<feature type="chain" id="PRO_0000163204" description="Pyridoxal phosphate homeostasis protein">
    <location>
        <begin position="1"/>
        <end position="258"/>
    </location>
</feature>
<feature type="modified residue" description="N6-(pyridoxal phosphate)lysine" evidence="1">
    <location>
        <position position="47"/>
    </location>
</feature>
<sequence>MAADLSAYPDRESELTHALAAMRSRLAAAAEAAGRNVGEIELLPITKFFPATDVAILFRLGCRSVGESREQEASAKMAELNRLLAAAELGHSGGVHWHMVGRIQRNKAGSLARWAHTAHSVDSSRLVTALDRAVVAALAEHRRGERLRVYVQVSLDGDGSRGGVDSTTPGAVDRICAQVQESEGLELVGLMGIPPLDWDPDEAFDRLQSEHNRVRAMFPHAIGLSAGMSNDLEVAVKHGSTCVRVGTALLGPRRLRSP</sequence>
<dbReference type="EMBL" id="LT708304">
    <property type="protein sequence ID" value="SIU00780.1"/>
    <property type="molecule type" value="Genomic_DNA"/>
</dbReference>
<dbReference type="RefSeq" id="NP_855821.1">
    <property type="nucleotide sequence ID" value="NC_002945.3"/>
</dbReference>
<dbReference type="RefSeq" id="WP_003411137.1">
    <property type="nucleotide sequence ID" value="NC_002945.4"/>
</dbReference>
<dbReference type="SMR" id="P67084"/>
<dbReference type="KEGG" id="mbo:BQ2027_MB2172C"/>
<dbReference type="PATRIC" id="fig|233413.5.peg.2388"/>
<dbReference type="Proteomes" id="UP000001419">
    <property type="component" value="Chromosome"/>
</dbReference>
<dbReference type="GO" id="GO:0030170">
    <property type="term" value="F:pyridoxal phosphate binding"/>
    <property type="evidence" value="ECO:0007669"/>
    <property type="project" value="UniProtKB-UniRule"/>
</dbReference>
<dbReference type="Gene3D" id="3.20.20.10">
    <property type="entry name" value="Alanine racemase"/>
    <property type="match status" value="1"/>
</dbReference>
<dbReference type="HAMAP" id="MF_02087">
    <property type="entry name" value="PLP_homeostasis"/>
    <property type="match status" value="1"/>
</dbReference>
<dbReference type="InterPro" id="IPR001608">
    <property type="entry name" value="Ala_racemase_N"/>
</dbReference>
<dbReference type="InterPro" id="IPR029066">
    <property type="entry name" value="PLP-binding_barrel"/>
</dbReference>
<dbReference type="InterPro" id="IPR011078">
    <property type="entry name" value="PyrdxlP_homeostasis"/>
</dbReference>
<dbReference type="NCBIfam" id="TIGR00044">
    <property type="entry name" value="YggS family pyridoxal phosphate-dependent enzyme"/>
    <property type="match status" value="1"/>
</dbReference>
<dbReference type="PANTHER" id="PTHR10146">
    <property type="entry name" value="PROLINE SYNTHETASE CO-TRANSCRIBED BACTERIAL HOMOLOG PROTEIN"/>
    <property type="match status" value="1"/>
</dbReference>
<dbReference type="PANTHER" id="PTHR10146:SF14">
    <property type="entry name" value="PYRIDOXAL PHOSPHATE HOMEOSTASIS PROTEIN"/>
    <property type="match status" value="1"/>
</dbReference>
<dbReference type="Pfam" id="PF01168">
    <property type="entry name" value="Ala_racemase_N"/>
    <property type="match status" value="1"/>
</dbReference>
<dbReference type="PIRSF" id="PIRSF004848">
    <property type="entry name" value="YBL036c_PLPDEIII"/>
    <property type="match status" value="1"/>
</dbReference>
<dbReference type="SUPFAM" id="SSF51419">
    <property type="entry name" value="PLP-binding barrel"/>
    <property type="match status" value="1"/>
</dbReference>
<dbReference type="PROSITE" id="PS01211">
    <property type="entry name" value="UPF0001"/>
    <property type="match status" value="1"/>
</dbReference>
<comment type="function">
    <text evidence="1">Pyridoxal 5'-phosphate (PLP)-binding protein, which is involved in PLP homeostasis.</text>
</comment>
<comment type="similarity">
    <text evidence="1">Belongs to the pyridoxal phosphate-binding protein YggS/PROSC family.</text>
</comment>
<organism>
    <name type="scientific">Mycobacterium bovis (strain ATCC BAA-935 / AF2122/97)</name>
    <dbReference type="NCBI Taxonomy" id="233413"/>
    <lineage>
        <taxon>Bacteria</taxon>
        <taxon>Bacillati</taxon>
        <taxon>Actinomycetota</taxon>
        <taxon>Actinomycetes</taxon>
        <taxon>Mycobacteriales</taxon>
        <taxon>Mycobacteriaceae</taxon>
        <taxon>Mycobacterium</taxon>
        <taxon>Mycobacterium tuberculosis complex</taxon>
    </lineage>
</organism>
<gene>
    <name type="ordered locus">BQ2027_MB2172C</name>
</gene>
<accession>P67084</accession>
<accession>A0A1R3Y0F2</accession>
<accession>O06228</accession>
<accession>X2BK84</accession>
<protein>
    <recommendedName>
        <fullName evidence="1">Pyridoxal phosphate homeostasis protein</fullName>
        <shortName evidence="1">PLP homeostasis protein</shortName>
    </recommendedName>
</protein>
<proteinExistence type="inferred from homology"/>
<evidence type="ECO:0000255" key="1">
    <source>
        <dbReference type="HAMAP-Rule" id="MF_02087"/>
    </source>
</evidence>